<feature type="chain" id="PRO_1000130019" description="Chaperonin GroEL">
    <location>
        <begin position="1"/>
        <end position="544"/>
    </location>
</feature>
<feature type="binding site" evidence="1">
    <location>
        <begin position="30"/>
        <end position="33"/>
    </location>
    <ligand>
        <name>ATP</name>
        <dbReference type="ChEBI" id="CHEBI:30616"/>
    </ligand>
</feature>
<feature type="binding site" evidence="1">
    <location>
        <position position="51"/>
    </location>
    <ligand>
        <name>ATP</name>
        <dbReference type="ChEBI" id="CHEBI:30616"/>
    </ligand>
</feature>
<feature type="binding site" evidence="1">
    <location>
        <begin position="87"/>
        <end position="91"/>
    </location>
    <ligand>
        <name>ATP</name>
        <dbReference type="ChEBI" id="CHEBI:30616"/>
    </ligand>
</feature>
<feature type="binding site" evidence="1">
    <location>
        <position position="415"/>
    </location>
    <ligand>
        <name>ATP</name>
        <dbReference type="ChEBI" id="CHEBI:30616"/>
    </ligand>
</feature>
<feature type="binding site" evidence="1">
    <location>
        <begin position="479"/>
        <end position="481"/>
    </location>
    <ligand>
        <name>ATP</name>
        <dbReference type="ChEBI" id="CHEBI:30616"/>
    </ligand>
</feature>
<feature type="binding site" evidence="1">
    <location>
        <position position="495"/>
    </location>
    <ligand>
        <name>ATP</name>
        <dbReference type="ChEBI" id="CHEBI:30616"/>
    </ligand>
</feature>
<name>CH60_FRATM</name>
<accession>B2SFF8</accession>
<protein>
    <recommendedName>
        <fullName evidence="1">Chaperonin GroEL</fullName>
        <ecNumber evidence="1">5.6.1.7</ecNumber>
    </recommendedName>
    <alternativeName>
        <fullName evidence="1">60 kDa chaperonin</fullName>
    </alternativeName>
    <alternativeName>
        <fullName evidence="1">Chaperonin-60</fullName>
        <shortName evidence="1">Cpn60</shortName>
    </alternativeName>
</protein>
<reference key="1">
    <citation type="journal article" date="2009" name="PLoS Pathog.">
        <title>Molecular evolutionary consequences of niche restriction in Francisella tularensis, a facultative intracellular pathogen.</title>
        <authorList>
            <person name="Larsson P."/>
            <person name="Elfsmark D."/>
            <person name="Svensson K."/>
            <person name="Wikstroem P."/>
            <person name="Forsman M."/>
            <person name="Brettin T."/>
            <person name="Keim P."/>
            <person name="Johansson A."/>
        </authorList>
    </citation>
    <scope>NUCLEOTIDE SEQUENCE [LARGE SCALE GENOMIC DNA]</scope>
    <source>
        <strain>FSC147</strain>
    </source>
</reference>
<evidence type="ECO:0000255" key="1">
    <source>
        <dbReference type="HAMAP-Rule" id="MF_00600"/>
    </source>
</evidence>
<proteinExistence type="inferred from homology"/>
<sequence>MAAKQVLFSDEARAKMLDGVNTLANAVKVTLGPKGRNVVLDKSFGAPTITKDGVSVAKEIELEDKFENMGAQIVKEVASKTADVAGDGTTTATVLAQALLTEGLKAVAAGINPMDLKRGIDKATARLVEELKALSKPCSDPKSIEQVGTISANSDATVGKLIADAMAKVGKEGVITVEEGKGFEDELDVVEGMQFDRGYLSPYFATNQENMTTDLENPYILIVDKKISNIRDLLPILEGVSKSGRALLIIAEDVESEALATLVVNNMRGVVKVCAVKAPGFGDRRKAMLEDIATLTGATFVSEDLSMKLEETNMEHLGTASRVQVTKDNTTIIDGAGEKEAIAKRINVIKANIAEANSDYDREKLQERLAKLSGGVAVIKVGAVTEAEMKEKKDRVDDALHATRAAVEEGIVAGGGVALIRAQKALDGLTGENDDQNHGIALLRKAIEAPLRQIVSNAGGESSVVVNQVKANQGNYGYNAANDTYGDMVEMGILDPTKVTRSALQHAASIAGLMITTEAMIGEIKEAAPAMPMGGGMGGMPGMI</sequence>
<gene>
    <name evidence="1" type="primary">groEL</name>
    <name evidence="1" type="synonym">groL</name>
    <name type="ordered locus">FTM_0235</name>
</gene>
<comment type="function">
    <text evidence="1">Together with its co-chaperonin GroES, plays an essential role in assisting protein folding. The GroEL-GroES system forms a nano-cage that allows encapsulation of the non-native substrate proteins and provides a physical environment optimized to promote and accelerate protein folding.</text>
</comment>
<comment type="catalytic activity">
    <reaction evidence="1">
        <text>ATP + H2O + a folded polypeptide = ADP + phosphate + an unfolded polypeptide.</text>
        <dbReference type="EC" id="5.6.1.7"/>
    </reaction>
</comment>
<comment type="subunit">
    <text evidence="1">Forms a cylinder of 14 subunits composed of two heptameric rings stacked back-to-back. Interacts with the co-chaperonin GroES.</text>
</comment>
<comment type="subcellular location">
    <subcellularLocation>
        <location evidence="1">Cytoplasm</location>
    </subcellularLocation>
</comment>
<comment type="similarity">
    <text evidence="1">Belongs to the chaperonin (HSP60) family.</text>
</comment>
<dbReference type="EC" id="5.6.1.7" evidence="1"/>
<dbReference type="EMBL" id="CP000915">
    <property type="protein sequence ID" value="ACD30311.1"/>
    <property type="molecule type" value="Genomic_DNA"/>
</dbReference>
<dbReference type="SMR" id="B2SFF8"/>
<dbReference type="KEGG" id="ftm:FTM_0235"/>
<dbReference type="HOGENOM" id="CLU_016503_3_0_6"/>
<dbReference type="GO" id="GO:0005737">
    <property type="term" value="C:cytoplasm"/>
    <property type="evidence" value="ECO:0007669"/>
    <property type="project" value="UniProtKB-SubCell"/>
</dbReference>
<dbReference type="GO" id="GO:0005524">
    <property type="term" value="F:ATP binding"/>
    <property type="evidence" value="ECO:0007669"/>
    <property type="project" value="UniProtKB-UniRule"/>
</dbReference>
<dbReference type="GO" id="GO:0140662">
    <property type="term" value="F:ATP-dependent protein folding chaperone"/>
    <property type="evidence" value="ECO:0007669"/>
    <property type="project" value="InterPro"/>
</dbReference>
<dbReference type="GO" id="GO:0016853">
    <property type="term" value="F:isomerase activity"/>
    <property type="evidence" value="ECO:0007669"/>
    <property type="project" value="UniProtKB-KW"/>
</dbReference>
<dbReference type="GO" id="GO:0051082">
    <property type="term" value="F:unfolded protein binding"/>
    <property type="evidence" value="ECO:0007669"/>
    <property type="project" value="UniProtKB-UniRule"/>
</dbReference>
<dbReference type="GO" id="GO:0042026">
    <property type="term" value="P:protein refolding"/>
    <property type="evidence" value="ECO:0007669"/>
    <property type="project" value="UniProtKB-UniRule"/>
</dbReference>
<dbReference type="CDD" id="cd03344">
    <property type="entry name" value="GroEL"/>
    <property type="match status" value="1"/>
</dbReference>
<dbReference type="FunFam" id="1.10.560.10:FF:000001">
    <property type="entry name" value="60 kDa chaperonin"/>
    <property type="match status" value="1"/>
</dbReference>
<dbReference type="FunFam" id="3.50.7.10:FF:000001">
    <property type="entry name" value="60 kDa chaperonin"/>
    <property type="match status" value="1"/>
</dbReference>
<dbReference type="Gene3D" id="3.50.7.10">
    <property type="entry name" value="GroEL"/>
    <property type="match status" value="1"/>
</dbReference>
<dbReference type="Gene3D" id="1.10.560.10">
    <property type="entry name" value="GroEL-like equatorial domain"/>
    <property type="match status" value="1"/>
</dbReference>
<dbReference type="Gene3D" id="3.30.260.10">
    <property type="entry name" value="TCP-1-like chaperonin intermediate domain"/>
    <property type="match status" value="1"/>
</dbReference>
<dbReference type="HAMAP" id="MF_00600">
    <property type="entry name" value="CH60"/>
    <property type="match status" value="1"/>
</dbReference>
<dbReference type="InterPro" id="IPR018370">
    <property type="entry name" value="Chaperonin_Cpn60_CS"/>
</dbReference>
<dbReference type="InterPro" id="IPR001844">
    <property type="entry name" value="Cpn60/GroEL"/>
</dbReference>
<dbReference type="InterPro" id="IPR002423">
    <property type="entry name" value="Cpn60/GroEL/TCP-1"/>
</dbReference>
<dbReference type="InterPro" id="IPR027409">
    <property type="entry name" value="GroEL-like_apical_dom_sf"/>
</dbReference>
<dbReference type="InterPro" id="IPR027413">
    <property type="entry name" value="GROEL-like_equatorial_sf"/>
</dbReference>
<dbReference type="InterPro" id="IPR027410">
    <property type="entry name" value="TCP-1-like_intermed_sf"/>
</dbReference>
<dbReference type="NCBIfam" id="TIGR02348">
    <property type="entry name" value="GroEL"/>
    <property type="match status" value="1"/>
</dbReference>
<dbReference type="NCBIfam" id="NF000592">
    <property type="entry name" value="PRK00013.1"/>
    <property type="match status" value="1"/>
</dbReference>
<dbReference type="NCBIfam" id="NF009487">
    <property type="entry name" value="PRK12849.1"/>
    <property type="match status" value="1"/>
</dbReference>
<dbReference type="NCBIfam" id="NF009488">
    <property type="entry name" value="PRK12850.1"/>
    <property type="match status" value="1"/>
</dbReference>
<dbReference type="NCBIfam" id="NF009489">
    <property type="entry name" value="PRK12851.1"/>
    <property type="match status" value="1"/>
</dbReference>
<dbReference type="PANTHER" id="PTHR45633">
    <property type="entry name" value="60 KDA HEAT SHOCK PROTEIN, MITOCHONDRIAL"/>
    <property type="match status" value="1"/>
</dbReference>
<dbReference type="Pfam" id="PF00118">
    <property type="entry name" value="Cpn60_TCP1"/>
    <property type="match status" value="1"/>
</dbReference>
<dbReference type="PRINTS" id="PR00298">
    <property type="entry name" value="CHAPERONIN60"/>
</dbReference>
<dbReference type="SUPFAM" id="SSF52029">
    <property type="entry name" value="GroEL apical domain-like"/>
    <property type="match status" value="1"/>
</dbReference>
<dbReference type="SUPFAM" id="SSF48592">
    <property type="entry name" value="GroEL equatorial domain-like"/>
    <property type="match status" value="1"/>
</dbReference>
<dbReference type="SUPFAM" id="SSF54849">
    <property type="entry name" value="GroEL-intermediate domain like"/>
    <property type="match status" value="1"/>
</dbReference>
<dbReference type="PROSITE" id="PS00296">
    <property type="entry name" value="CHAPERONINS_CPN60"/>
    <property type="match status" value="1"/>
</dbReference>
<keyword id="KW-0067">ATP-binding</keyword>
<keyword id="KW-0143">Chaperone</keyword>
<keyword id="KW-0963">Cytoplasm</keyword>
<keyword id="KW-0413">Isomerase</keyword>
<keyword id="KW-0547">Nucleotide-binding</keyword>
<organism>
    <name type="scientific">Francisella tularensis subsp. mediasiatica (strain FSC147)</name>
    <dbReference type="NCBI Taxonomy" id="441952"/>
    <lineage>
        <taxon>Bacteria</taxon>
        <taxon>Pseudomonadati</taxon>
        <taxon>Pseudomonadota</taxon>
        <taxon>Gammaproteobacteria</taxon>
        <taxon>Thiotrichales</taxon>
        <taxon>Francisellaceae</taxon>
        <taxon>Francisella</taxon>
    </lineage>
</organism>